<gene>
    <name evidence="1" type="primary">cheB3</name>
    <name type="ordered locus">PA3703</name>
</gene>
<reference key="1">
    <citation type="journal article" date="2000" name="Nature">
        <title>Complete genome sequence of Pseudomonas aeruginosa PAO1, an opportunistic pathogen.</title>
        <authorList>
            <person name="Stover C.K."/>
            <person name="Pham X.-Q.T."/>
            <person name="Erwin A.L."/>
            <person name="Mizoguchi S.D."/>
            <person name="Warrener P."/>
            <person name="Hickey M.J."/>
            <person name="Brinkman F.S.L."/>
            <person name="Hufnagle W.O."/>
            <person name="Kowalik D.J."/>
            <person name="Lagrou M."/>
            <person name="Garber R.L."/>
            <person name="Goltry L."/>
            <person name="Tolentino E."/>
            <person name="Westbrock-Wadman S."/>
            <person name="Yuan Y."/>
            <person name="Brody L.L."/>
            <person name="Coulter S.N."/>
            <person name="Folger K.R."/>
            <person name="Kas A."/>
            <person name="Larbig K."/>
            <person name="Lim R.M."/>
            <person name="Smith K.A."/>
            <person name="Spencer D.H."/>
            <person name="Wong G.K.-S."/>
            <person name="Wu Z."/>
            <person name="Paulsen I.T."/>
            <person name="Reizer J."/>
            <person name="Saier M.H. Jr."/>
            <person name="Hancock R.E.W."/>
            <person name="Lory S."/>
            <person name="Olson M.V."/>
        </authorList>
    </citation>
    <scope>NUCLEOTIDE SEQUENCE [LARGE SCALE GENOMIC DNA]</scope>
    <source>
        <strain>ATCC 15692 / DSM 22644 / CIP 104116 / JCM 14847 / LMG 12228 / 1C / PRS 101 / PAO1</strain>
    </source>
</reference>
<name>CHEB3_PSEAE</name>
<feature type="chain" id="PRO_0000158010" description="Protein-glutamate methylesterase/protein-glutamine glutaminase 3">
    <location>
        <begin position="1"/>
        <end position="335"/>
    </location>
</feature>
<feature type="domain" description="Response regulatory" evidence="1">
    <location>
        <begin position="2"/>
        <end position="119"/>
    </location>
</feature>
<feature type="domain" description="CheB-type methylesterase" evidence="1">
    <location>
        <begin position="144"/>
        <end position="335"/>
    </location>
</feature>
<feature type="active site" evidence="1">
    <location>
        <position position="159"/>
    </location>
</feature>
<feature type="active site" evidence="1">
    <location>
        <position position="186"/>
    </location>
</feature>
<feature type="active site" evidence="1">
    <location>
        <position position="279"/>
    </location>
</feature>
<feature type="modified residue" description="4-aspartylphosphate" evidence="1">
    <location>
        <position position="53"/>
    </location>
</feature>
<accession>Q9HXT8</accession>
<keyword id="KW-0145">Chemotaxis</keyword>
<keyword id="KW-0963">Cytoplasm</keyword>
<keyword id="KW-0378">Hydrolase</keyword>
<keyword id="KW-0597">Phosphoprotein</keyword>
<keyword id="KW-1185">Reference proteome</keyword>
<evidence type="ECO:0000255" key="1">
    <source>
        <dbReference type="HAMAP-Rule" id="MF_00099"/>
    </source>
</evidence>
<comment type="function">
    <text evidence="1">Involved in chemotaxis. Part of a chemotaxis signal transduction system that modulates chemotaxis in response to various stimuli. Catalyzes the demethylation of specific methylglutamate residues introduced into the chemoreceptors (methyl-accepting chemotaxis proteins or MCP) by CheR. Also mediates the irreversible deamidation of specific glutamine residues to glutamic acid.</text>
</comment>
<comment type="catalytic activity">
    <reaction evidence="1">
        <text>[protein]-L-glutamate 5-O-methyl ester + H2O = L-glutamyl-[protein] + methanol + H(+)</text>
        <dbReference type="Rhea" id="RHEA:23236"/>
        <dbReference type="Rhea" id="RHEA-COMP:10208"/>
        <dbReference type="Rhea" id="RHEA-COMP:10311"/>
        <dbReference type="ChEBI" id="CHEBI:15377"/>
        <dbReference type="ChEBI" id="CHEBI:15378"/>
        <dbReference type="ChEBI" id="CHEBI:17790"/>
        <dbReference type="ChEBI" id="CHEBI:29973"/>
        <dbReference type="ChEBI" id="CHEBI:82795"/>
        <dbReference type="EC" id="3.1.1.61"/>
    </reaction>
</comment>
<comment type="catalytic activity">
    <reaction evidence="1">
        <text>L-glutaminyl-[protein] + H2O = L-glutamyl-[protein] + NH4(+)</text>
        <dbReference type="Rhea" id="RHEA:16441"/>
        <dbReference type="Rhea" id="RHEA-COMP:10207"/>
        <dbReference type="Rhea" id="RHEA-COMP:10208"/>
        <dbReference type="ChEBI" id="CHEBI:15377"/>
        <dbReference type="ChEBI" id="CHEBI:28938"/>
        <dbReference type="ChEBI" id="CHEBI:29973"/>
        <dbReference type="ChEBI" id="CHEBI:30011"/>
        <dbReference type="EC" id="3.5.1.44"/>
    </reaction>
</comment>
<comment type="subcellular location">
    <subcellularLocation>
        <location evidence="1">Cytoplasm</location>
    </subcellularLocation>
</comment>
<comment type="domain">
    <text evidence="1">Contains a C-terminal catalytic domain, and an N-terminal region which modulates catalytic activity.</text>
</comment>
<comment type="PTM">
    <text evidence="1">Phosphorylated by CheA. Phosphorylation of the N-terminal regulatory domain activates the methylesterase activity.</text>
</comment>
<comment type="similarity">
    <text evidence="1">Belongs to the CheB family.</text>
</comment>
<organism>
    <name type="scientific">Pseudomonas aeruginosa (strain ATCC 15692 / DSM 22644 / CIP 104116 / JCM 14847 / LMG 12228 / 1C / PRS 101 / PAO1)</name>
    <dbReference type="NCBI Taxonomy" id="208964"/>
    <lineage>
        <taxon>Bacteria</taxon>
        <taxon>Pseudomonadati</taxon>
        <taxon>Pseudomonadota</taxon>
        <taxon>Gammaproteobacteria</taxon>
        <taxon>Pseudomonadales</taxon>
        <taxon>Pseudomonadaceae</taxon>
        <taxon>Pseudomonas</taxon>
    </lineage>
</organism>
<protein>
    <recommendedName>
        <fullName evidence="1">Protein-glutamate methylesterase/protein-glutamine glutaminase 3</fullName>
        <ecNumber evidence="1">3.1.1.61</ecNumber>
        <ecNumber evidence="1">3.5.1.44</ecNumber>
    </recommendedName>
</protein>
<dbReference type="EC" id="3.1.1.61" evidence="1"/>
<dbReference type="EC" id="3.5.1.44" evidence="1"/>
<dbReference type="EMBL" id="AE004091">
    <property type="protein sequence ID" value="AAG07090.1"/>
    <property type="molecule type" value="Genomic_DNA"/>
</dbReference>
<dbReference type="PIR" id="F83183">
    <property type="entry name" value="F83183"/>
</dbReference>
<dbReference type="SMR" id="Q9HXT8"/>
<dbReference type="STRING" id="208964.PA3703"/>
<dbReference type="PaxDb" id="208964-PA3703"/>
<dbReference type="KEGG" id="pae:PA3703"/>
<dbReference type="PATRIC" id="fig|208964.12.peg.3874"/>
<dbReference type="PseudoCAP" id="PA3703"/>
<dbReference type="HOGENOM" id="CLU_000445_51_0_6"/>
<dbReference type="InParanoid" id="Q9HXT8"/>
<dbReference type="OrthoDB" id="9793421at2"/>
<dbReference type="PhylomeDB" id="Q9HXT8"/>
<dbReference type="BioCyc" id="PAER208964:G1FZ6-3773-MONOMER"/>
<dbReference type="Proteomes" id="UP000002438">
    <property type="component" value="Chromosome"/>
</dbReference>
<dbReference type="GO" id="GO:0005737">
    <property type="term" value="C:cytoplasm"/>
    <property type="evidence" value="ECO:0007669"/>
    <property type="project" value="UniProtKB-SubCell"/>
</dbReference>
<dbReference type="GO" id="GO:0000156">
    <property type="term" value="F:phosphorelay response regulator activity"/>
    <property type="evidence" value="ECO:0007669"/>
    <property type="project" value="InterPro"/>
</dbReference>
<dbReference type="GO" id="GO:0008984">
    <property type="term" value="F:protein-glutamate methylesterase activity"/>
    <property type="evidence" value="ECO:0007669"/>
    <property type="project" value="UniProtKB-UniRule"/>
</dbReference>
<dbReference type="GO" id="GO:0050568">
    <property type="term" value="F:protein-glutamine glutaminase activity"/>
    <property type="evidence" value="ECO:0007669"/>
    <property type="project" value="UniProtKB-UniRule"/>
</dbReference>
<dbReference type="GO" id="GO:0006935">
    <property type="term" value="P:chemotaxis"/>
    <property type="evidence" value="ECO:0007669"/>
    <property type="project" value="UniProtKB-UniRule"/>
</dbReference>
<dbReference type="CDD" id="cd16432">
    <property type="entry name" value="CheB_Rec"/>
    <property type="match status" value="1"/>
</dbReference>
<dbReference type="CDD" id="cd17541">
    <property type="entry name" value="REC_CheB-like"/>
    <property type="match status" value="1"/>
</dbReference>
<dbReference type="Gene3D" id="3.40.50.2300">
    <property type="match status" value="1"/>
</dbReference>
<dbReference type="Gene3D" id="3.40.50.180">
    <property type="entry name" value="Methylesterase CheB, C-terminal domain"/>
    <property type="match status" value="1"/>
</dbReference>
<dbReference type="HAMAP" id="MF_00099">
    <property type="entry name" value="CheB_chemtxs"/>
    <property type="match status" value="1"/>
</dbReference>
<dbReference type="InterPro" id="IPR008248">
    <property type="entry name" value="CheB-like"/>
</dbReference>
<dbReference type="InterPro" id="IPR035909">
    <property type="entry name" value="CheB_C"/>
</dbReference>
<dbReference type="InterPro" id="IPR011006">
    <property type="entry name" value="CheY-like_superfamily"/>
</dbReference>
<dbReference type="InterPro" id="IPR000673">
    <property type="entry name" value="Sig_transdc_resp-reg_Me-estase"/>
</dbReference>
<dbReference type="InterPro" id="IPR001789">
    <property type="entry name" value="Sig_transdc_resp-reg_receiver"/>
</dbReference>
<dbReference type="NCBIfam" id="NF001965">
    <property type="entry name" value="PRK00742.1"/>
    <property type="match status" value="1"/>
</dbReference>
<dbReference type="NCBIfam" id="NF009206">
    <property type="entry name" value="PRK12555.1"/>
    <property type="match status" value="1"/>
</dbReference>
<dbReference type="PANTHER" id="PTHR42872">
    <property type="entry name" value="PROTEIN-GLUTAMATE METHYLESTERASE/PROTEIN-GLUTAMINE GLUTAMINASE"/>
    <property type="match status" value="1"/>
</dbReference>
<dbReference type="PANTHER" id="PTHR42872:SF6">
    <property type="entry name" value="PROTEIN-GLUTAMATE METHYLESTERASE_PROTEIN-GLUTAMINE GLUTAMINASE"/>
    <property type="match status" value="1"/>
</dbReference>
<dbReference type="Pfam" id="PF01339">
    <property type="entry name" value="CheB_methylest"/>
    <property type="match status" value="1"/>
</dbReference>
<dbReference type="Pfam" id="PF00072">
    <property type="entry name" value="Response_reg"/>
    <property type="match status" value="1"/>
</dbReference>
<dbReference type="PIRSF" id="PIRSF000876">
    <property type="entry name" value="RR_chemtxs_CheB"/>
    <property type="match status" value="1"/>
</dbReference>
<dbReference type="SMART" id="SM00448">
    <property type="entry name" value="REC"/>
    <property type="match status" value="1"/>
</dbReference>
<dbReference type="SUPFAM" id="SSF52172">
    <property type="entry name" value="CheY-like"/>
    <property type="match status" value="1"/>
</dbReference>
<dbReference type="SUPFAM" id="SSF52738">
    <property type="entry name" value="Methylesterase CheB, C-terminal domain"/>
    <property type="match status" value="1"/>
</dbReference>
<dbReference type="PROSITE" id="PS50122">
    <property type="entry name" value="CHEB"/>
    <property type="match status" value="1"/>
</dbReference>
<dbReference type="PROSITE" id="PS50110">
    <property type="entry name" value="RESPONSE_REGULATORY"/>
    <property type="match status" value="1"/>
</dbReference>
<proteinExistence type="inferred from homology"/>
<sequence>MRIGIVNDMPLAVEALRRALAFEPQHQIVWVASNGAEAVTQCAADTPDVVLMDLLMPVMDGVEATRRIMAESPCAIVIVTVDIEQNVHRVFEAMGYGALDAVNTPALGIGNPQTAAAPLLRKIQNVGWLIGQRDNRGKVQVVPPKAGGARQRLVAIGASAGGPASLAVLLKQLPASFNAAVVLVQHVDEVFAAGMAEWLASESKLPVRLARDGEPPIPGQILLAGTNNHIRLLRNGSLVYTAEPRSFVYRPSIDVFFESVANYWRGDAVGVLLTGMGRDGAQGLKQMRERGFLTIAQDQASCAVYGMPKAAAAIDAAVQILSLEKIAPRLAEVFD</sequence>